<proteinExistence type="inferred from homology"/>
<evidence type="ECO:0000255" key="1">
    <source>
        <dbReference type="HAMAP-Rule" id="MF_00041"/>
    </source>
</evidence>
<gene>
    <name evidence="1" type="primary">cysS</name>
    <name type="ordered locus">Mfl087</name>
</gene>
<reference key="1">
    <citation type="submission" date="2004-06" db="EMBL/GenBank/DDBJ databases">
        <authorList>
            <person name="Birren B.W."/>
            <person name="Stange-Thomann N."/>
            <person name="Hafez N."/>
            <person name="DeCaprio D."/>
            <person name="Fisher S."/>
            <person name="Butler J."/>
            <person name="Elkins T."/>
            <person name="Kodira C.D."/>
            <person name="Major J."/>
            <person name="Wang S."/>
            <person name="Nicol R."/>
            <person name="Nusbaum C."/>
        </authorList>
    </citation>
    <scope>NUCLEOTIDE SEQUENCE [LARGE SCALE GENOMIC DNA]</scope>
    <source>
        <strain>ATCC 33453 / NBRC 100688 / NCTC 11704 / L1</strain>
    </source>
</reference>
<name>SYC_MESFL</name>
<protein>
    <recommendedName>
        <fullName evidence="1">Cysteine--tRNA ligase</fullName>
        <ecNumber evidence="1">6.1.1.16</ecNumber>
    </recommendedName>
    <alternativeName>
        <fullName evidence="1">Cysteinyl-tRNA synthetase</fullName>
        <shortName evidence="1">CysRS</shortName>
    </alternativeName>
</protein>
<dbReference type="EC" id="6.1.1.16" evidence="1"/>
<dbReference type="EMBL" id="AE017263">
    <property type="protein sequence ID" value="AAT75443.1"/>
    <property type="molecule type" value="Genomic_DNA"/>
</dbReference>
<dbReference type="RefSeq" id="WP_011182984.1">
    <property type="nucleotide sequence ID" value="NC_006055.1"/>
</dbReference>
<dbReference type="RefSeq" id="YP_053327.1">
    <property type="nucleotide sequence ID" value="NC_006055.1"/>
</dbReference>
<dbReference type="SMR" id="Q6F230"/>
<dbReference type="STRING" id="265311.Mfl087"/>
<dbReference type="PaxDb" id="265311-Mfl087"/>
<dbReference type="EnsemblBacteria" id="AAT75443">
    <property type="protein sequence ID" value="AAT75443"/>
    <property type="gene ID" value="Mfl087"/>
</dbReference>
<dbReference type="GeneID" id="2897700"/>
<dbReference type="KEGG" id="mfl:Mfl087"/>
<dbReference type="PATRIC" id="fig|265311.5.peg.88"/>
<dbReference type="eggNOG" id="COG0215">
    <property type="taxonomic scope" value="Bacteria"/>
</dbReference>
<dbReference type="HOGENOM" id="CLU_013528_0_0_14"/>
<dbReference type="OrthoDB" id="9815130at2"/>
<dbReference type="Proteomes" id="UP000006647">
    <property type="component" value="Chromosome"/>
</dbReference>
<dbReference type="GO" id="GO:0005829">
    <property type="term" value="C:cytosol"/>
    <property type="evidence" value="ECO:0007669"/>
    <property type="project" value="TreeGrafter"/>
</dbReference>
<dbReference type="GO" id="GO:0005524">
    <property type="term" value="F:ATP binding"/>
    <property type="evidence" value="ECO:0007669"/>
    <property type="project" value="UniProtKB-UniRule"/>
</dbReference>
<dbReference type="GO" id="GO:0004817">
    <property type="term" value="F:cysteine-tRNA ligase activity"/>
    <property type="evidence" value="ECO:0007669"/>
    <property type="project" value="UniProtKB-UniRule"/>
</dbReference>
<dbReference type="GO" id="GO:0008270">
    <property type="term" value="F:zinc ion binding"/>
    <property type="evidence" value="ECO:0007669"/>
    <property type="project" value="UniProtKB-UniRule"/>
</dbReference>
<dbReference type="GO" id="GO:0006423">
    <property type="term" value="P:cysteinyl-tRNA aminoacylation"/>
    <property type="evidence" value="ECO:0007669"/>
    <property type="project" value="UniProtKB-UniRule"/>
</dbReference>
<dbReference type="CDD" id="cd00672">
    <property type="entry name" value="CysRS_core"/>
    <property type="match status" value="1"/>
</dbReference>
<dbReference type="Gene3D" id="1.20.120.1910">
    <property type="entry name" value="Cysteine-tRNA ligase, C-terminal anti-codon recognition domain"/>
    <property type="match status" value="1"/>
</dbReference>
<dbReference type="Gene3D" id="3.40.50.620">
    <property type="entry name" value="HUPs"/>
    <property type="match status" value="1"/>
</dbReference>
<dbReference type="HAMAP" id="MF_00041">
    <property type="entry name" value="Cys_tRNA_synth"/>
    <property type="match status" value="1"/>
</dbReference>
<dbReference type="InterPro" id="IPR015803">
    <property type="entry name" value="Cys-tRNA-ligase"/>
</dbReference>
<dbReference type="InterPro" id="IPR024909">
    <property type="entry name" value="Cys-tRNA/MSH_ligase"/>
</dbReference>
<dbReference type="InterPro" id="IPR014729">
    <property type="entry name" value="Rossmann-like_a/b/a_fold"/>
</dbReference>
<dbReference type="InterPro" id="IPR032678">
    <property type="entry name" value="tRNA-synt_1_cat_dom"/>
</dbReference>
<dbReference type="InterPro" id="IPR009080">
    <property type="entry name" value="tRNAsynth_Ia_anticodon-bd"/>
</dbReference>
<dbReference type="NCBIfam" id="TIGR00435">
    <property type="entry name" value="cysS"/>
    <property type="match status" value="1"/>
</dbReference>
<dbReference type="PANTHER" id="PTHR10890:SF3">
    <property type="entry name" value="CYSTEINE--TRNA LIGASE, CYTOPLASMIC"/>
    <property type="match status" value="1"/>
</dbReference>
<dbReference type="PANTHER" id="PTHR10890">
    <property type="entry name" value="CYSTEINYL-TRNA SYNTHETASE"/>
    <property type="match status" value="1"/>
</dbReference>
<dbReference type="Pfam" id="PF01406">
    <property type="entry name" value="tRNA-synt_1e"/>
    <property type="match status" value="1"/>
</dbReference>
<dbReference type="PRINTS" id="PR00983">
    <property type="entry name" value="TRNASYNTHCYS"/>
</dbReference>
<dbReference type="SUPFAM" id="SSF47323">
    <property type="entry name" value="Anticodon-binding domain of a subclass of class I aminoacyl-tRNA synthetases"/>
    <property type="match status" value="1"/>
</dbReference>
<dbReference type="SUPFAM" id="SSF52374">
    <property type="entry name" value="Nucleotidylyl transferase"/>
    <property type="match status" value="1"/>
</dbReference>
<keyword id="KW-0030">Aminoacyl-tRNA synthetase</keyword>
<keyword id="KW-0067">ATP-binding</keyword>
<keyword id="KW-0963">Cytoplasm</keyword>
<keyword id="KW-0436">Ligase</keyword>
<keyword id="KW-0479">Metal-binding</keyword>
<keyword id="KW-0547">Nucleotide-binding</keyword>
<keyword id="KW-0648">Protein biosynthesis</keyword>
<keyword id="KW-1185">Reference proteome</keyword>
<keyword id="KW-0862">Zinc</keyword>
<feature type="chain" id="PRO_0000159425" description="Cysteine--tRNA ligase">
    <location>
        <begin position="1"/>
        <end position="441"/>
    </location>
</feature>
<feature type="short sequence motif" description="'HIGH' region">
    <location>
        <begin position="26"/>
        <end position="36"/>
    </location>
</feature>
<feature type="short sequence motif" description="'KMSKS' region">
    <location>
        <begin position="262"/>
        <end position="266"/>
    </location>
</feature>
<feature type="binding site" evidence="1">
    <location>
        <position position="24"/>
    </location>
    <ligand>
        <name>Zn(2+)</name>
        <dbReference type="ChEBI" id="CHEBI:29105"/>
    </ligand>
</feature>
<feature type="binding site" evidence="1">
    <location>
        <position position="204"/>
    </location>
    <ligand>
        <name>Zn(2+)</name>
        <dbReference type="ChEBI" id="CHEBI:29105"/>
    </ligand>
</feature>
<feature type="binding site" evidence="1">
    <location>
        <position position="230"/>
    </location>
    <ligand>
        <name>Zn(2+)</name>
        <dbReference type="ChEBI" id="CHEBI:29105"/>
    </ligand>
</feature>
<feature type="binding site" evidence="1">
    <location>
        <position position="234"/>
    </location>
    <ligand>
        <name>Zn(2+)</name>
        <dbReference type="ChEBI" id="CHEBI:29105"/>
    </ligand>
</feature>
<feature type="binding site" evidence="1">
    <location>
        <position position="265"/>
    </location>
    <ligand>
        <name>ATP</name>
        <dbReference type="ChEBI" id="CHEBI:30616"/>
    </ligand>
</feature>
<comment type="catalytic activity">
    <reaction evidence="1">
        <text>tRNA(Cys) + L-cysteine + ATP = L-cysteinyl-tRNA(Cys) + AMP + diphosphate</text>
        <dbReference type="Rhea" id="RHEA:17773"/>
        <dbReference type="Rhea" id="RHEA-COMP:9661"/>
        <dbReference type="Rhea" id="RHEA-COMP:9679"/>
        <dbReference type="ChEBI" id="CHEBI:30616"/>
        <dbReference type="ChEBI" id="CHEBI:33019"/>
        <dbReference type="ChEBI" id="CHEBI:35235"/>
        <dbReference type="ChEBI" id="CHEBI:78442"/>
        <dbReference type="ChEBI" id="CHEBI:78517"/>
        <dbReference type="ChEBI" id="CHEBI:456215"/>
        <dbReference type="EC" id="6.1.1.16"/>
    </reaction>
</comment>
<comment type="cofactor">
    <cofactor evidence="1">
        <name>Zn(2+)</name>
        <dbReference type="ChEBI" id="CHEBI:29105"/>
    </cofactor>
    <text evidence="1">Binds 1 zinc ion per subunit.</text>
</comment>
<comment type="subunit">
    <text evidence="1">Monomer.</text>
</comment>
<comment type="subcellular location">
    <subcellularLocation>
        <location evidence="1">Cytoplasm</location>
    </subcellularLocation>
</comment>
<comment type="similarity">
    <text evidence="1">Belongs to the class-I aminoacyl-tRNA synthetase family.</text>
</comment>
<organism>
    <name type="scientific">Mesoplasma florum (strain ATCC 33453 / NBRC 100688 / NCTC 11704 / L1)</name>
    <name type="common">Acholeplasma florum</name>
    <dbReference type="NCBI Taxonomy" id="265311"/>
    <lineage>
        <taxon>Bacteria</taxon>
        <taxon>Bacillati</taxon>
        <taxon>Mycoplasmatota</taxon>
        <taxon>Mollicutes</taxon>
        <taxon>Entomoplasmatales</taxon>
        <taxon>Entomoplasmataceae</taxon>
        <taxon>Mesoplasma</taxon>
    </lineage>
</organism>
<accession>Q6F230</accession>
<sequence length="441" mass="51346">MKLFDTLTQEQKNINKEVINIYSCGPTIYDYIHIGNARPIILMDTLIRFLESEGIKVNFLQNITDIDDKIIEKAIQENKTEKEITDKYLSAFLQNLKDLKIRMPDKLIPISEKISEMNLFIDDLVKLEAAYNVDGDVYFDIQKFSDEYGKLSNKKINDLISGNRVEIEDKKNNPLDFSVWKKTEKGITFDSNFGKGRPGWHTECALLIDEYFKGETIDIHSGGIDLQFPHHENERIQFIAKHGKEISDIWVHNGHLTINGEKMSKSLGNTMTLTNFLANYNSDILRWIFLTTYYKQPLNINDDLIEQANKFIQKINNLSKKIKQLLIENKFVKTNQFDEEIIKQFKIHMKNDLNTSRVLTLLEDTLKDINKLSTLKEFDDLFLKINSLNYILKTLGLSININTFVSDEEQNLFLLWKKIVSEKDFEKADEIRKVLISKGIL</sequence>